<reference key="1">
    <citation type="journal article" date="2004" name="DNA Res.">
        <title>Complete nucleotide sequence of the sugarcane (Saccharum officinarum) chloroplast genome: a comparative analysis of four monocot chloroplast genomes.</title>
        <authorList>
            <person name="Asano T."/>
            <person name="Tsudzuki T."/>
            <person name="Takahashi S."/>
            <person name="Shimada H."/>
            <person name="Kadowaki K."/>
        </authorList>
    </citation>
    <scope>NUCLEOTIDE SEQUENCE [LARGE SCALE GENOMIC DNA]</scope>
</reference>
<keyword id="KW-0066">ATP synthesis</keyword>
<keyword id="KW-0067">ATP-binding</keyword>
<keyword id="KW-0139">CF(1)</keyword>
<keyword id="KW-0150">Chloroplast</keyword>
<keyword id="KW-0375">Hydrogen ion transport</keyword>
<keyword id="KW-0406">Ion transport</keyword>
<keyword id="KW-0472">Membrane</keyword>
<keyword id="KW-0547">Nucleotide-binding</keyword>
<keyword id="KW-0934">Plastid</keyword>
<keyword id="KW-0793">Thylakoid</keyword>
<keyword id="KW-1278">Translocase</keyword>
<keyword id="KW-0813">Transport</keyword>
<geneLocation type="chloroplast"/>
<feature type="chain" id="PRO_0000226897" description="ATP synthase subunit beta, chloroplastic">
    <location>
        <begin position="1"/>
        <end position="498"/>
    </location>
</feature>
<feature type="binding site" evidence="1">
    <location>
        <begin position="172"/>
        <end position="179"/>
    </location>
    <ligand>
        <name>ATP</name>
        <dbReference type="ChEBI" id="CHEBI:30616"/>
    </ligand>
</feature>
<evidence type="ECO:0000255" key="1">
    <source>
        <dbReference type="HAMAP-Rule" id="MF_01347"/>
    </source>
</evidence>
<accession>Q6ENV6</accession>
<proteinExistence type="inferred from homology"/>
<gene>
    <name evidence="1" type="primary">atpB</name>
</gene>
<dbReference type="EC" id="7.1.2.2" evidence="1"/>
<dbReference type="EMBL" id="AP006714">
    <property type="protein sequence ID" value="BAD27300.1"/>
    <property type="molecule type" value="Genomic_DNA"/>
</dbReference>
<dbReference type="RefSeq" id="YP_009389578.1">
    <property type="nucleotide sequence ID" value="NC_035224.1"/>
</dbReference>
<dbReference type="SMR" id="Q6ENV6"/>
<dbReference type="GeneID" id="33347764"/>
<dbReference type="GO" id="GO:0009535">
    <property type="term" value="C:chloroplast thylakoid membrane"/>
    <property type="evidence" value="ECO:0007669"/>
    <property type="project" value="UniProtKB-SubCell"/>
</dbReference>
<dbReference type="GO" id="GO:0005739">
    <property type="term" value="C:mitochondrion"/>
    <property type="evidence" value="ECO:0007669"/>
    <property type="project" value="GOC"/>
</dbReference>
<dbReference type="GO" id="GO:0045259">
    <property type="term" value="C:proton-transporting ATP synthase complex"/>
    <property type="evidence" value="ECO:0007669"/>
    <property type="project" value="UniProtKB-KW"/>
</dbReference>
<dbReference type="GO" id="GO:0005524">
    <property type="term" value="F:ATP binding"/>
    <property type="evidence" value="ECO:0007669"/>
    <property type="project" value="UniProtKB-UniRule"/>
</dbReference>
<dbReference type="GO" id="GO:0016887">
    <property type="term" value="F:ATP hydrolysis activity"/>
    <property type="evidence" value="ECO:0007669"/>
    <property type="project" value="InterPro"/>
</dbReference>
<dbReference type="GO" id="GO:0046933">
    <property type="term" value="F:proton-transporting ATP synthase activity, rotational mechanism"/>
    <property type="evidence" value="ECO:0007669"/>
    <property type="project" value="UniProtKB-UniRule"/>
</dbReference>
<dbReference type="GO" id="GO:0042776">
    <property type="term" value="P:proton motive force-driven mitochondrial ATP synthesis"/>
    <property type="evidence" value="ECO:0007669"/>
    <property type="project" value="TreeGrafter"/>
</dbReference>
<dbReference type="CDD" id="cd18110">
    <property type="entry name" value="ATP-synt_F1_beta_C"/>
    <property type="match status" value="1"/>
</dbReference>
<dbReference type="CDD" id="cd18115">
    <property type="entry name" value="ATP-synt_F1_beta_N"/>
    <property type="match status" value="1"/>
</dbReference>
<dbReference type="CDD" id="cd01133">
    <property type="entry name" value="F1-ATPase_beta_CD"/>
    <property type="match status" value="1"/>
</dbReference>
<dbReference type="FunFam" id="1.10.1140.10:FF:000001">
    <property type="entry name" value="ATP synthase subunit beta"/>
    <property type="match status" value="1"/>
</dbReference>
<dbReference type="FunFam" id="3.40.50.12240:FF:000006">
    <property type="entry name" value="ATP synthase subunit beta"/>
    <property type="match status" value="1"/>
</dbReference>
<dbReference type="FunFam" id="3.40.50.300:FF:000026">
    <property type="entry name" value="ATP synthase subunit beta"/>
    <property type="match status" value="1"/>
</dbReference>
<dbReference type="FunFam" id="2.40.10.170:FF:000002">
    <property type="entry name" value="ATP synthase subunit beta, chloroplastic"/>
    <property type="match status" value="1"/>
</dbReference>
<dbReference type="Gene3D" id="2.40.10.170">
    <property type="match status" value="1"/>
</dbReference>
<dbReference type="Gene3D" id="1.10.1140.10">
    <property type="entry name" value="Bovine Mitochondrial F1-atpase, Atp Synthase Beta Chain, Chain D, domain 3"/>
    <property type="match status" value="1"/>
</dbReference>
<dbReference type="Gene3D" id="3.40.50.300">
    <property type="entry name" value="P-loop containing nucleotide triphosphate hydrolases"/>
    <property type="match status" value="1"/>
</dbReference>
<dbReference type="HAMAP" id="MF_01347">
    <property type="entry name" value="ATP_synth_beta_bact"/>
    <property type="match status" value="1"/>
</dbReference>
<dbReference type="InterPro" id="IPR003593">
    <property type="entry name" value="AAA+_ATPase"/>
</dbReference>
<dbReference type="InterPro" id="IPR055190">
    <property type="entry name" value="ATP-synt_VA_C"/>
</dbReference>
<dbReference type="InterPro" id="IPR005722">
    <property type="entry name" value="ATP_synth_F1_bsu"/>
</dbReference>
<dbReference type="InterPro" id="IPR020003">
    <property type="entry name" value="ATPase_a/bsu_AS"/>
</dbReference>
<dbReference type="InterPro" id="IPR050053">
    <property type="entry name" value="ATPase_alpha/beta_chains"/>
</dbReference>
<dbReference type="InterPro" id="IPR004100">
    <property type="entry name" value="ATPase_F1/V1/A1_a/bsu_N"/>
</dbReference>
<dbReference type="InterPro" id="IPR036121">
    <property type="entry name" value="ATPase_F1/V1/A1_a/bsu_N_sf"/>
</dbReference>
<dbReference type="InterPro" id="IPR000194">
    <property type="entry name" value="ATPase_F1/V1/A1_a/bsu_nucl-bd"/>
</dbReference>
<dbReference type="InterPro" id="IPR024034">
    <property type="entry name" value="ATPase_F1/V1_b/a_C"/>
</dbReference>
<dbReference type="InterPro" id="IPR027417">
    <property type="entry name" value="P-loop_NTPase"/>
</dbReference>
<dbReference type="NCBIfam" id="TIGR01039">
    <property type="entry name" value="atpD"/>
    <property type="match status" value="1"/>
</dbReference>
<dbReference type="PANTHER" id="PTHR15184">
    <property type="entry name" value="ATP SYNTHASE"/>
    <property type="match status" value="1"/>
</dbReference>
<dbReference type="PANTHER" id="PTHR15184:SF71">
    <property type="entry name" value="ATP SYNTHASE SUBUNIT BETA, MITOCHONDRIAL"/>
    <property type="match status" value="1"/>
</dbReference>
<dbReference type="Pfam" id="PF00006">
    <property type="entry name" value="ATP-synt_ab"/>
    <property type="match status" value="1"/>
</dbReference>
<dbReference type="Pfam" id="PF02874">
    <property type="entry name" value="ATP-synt_ab_N"/>
    <property type="match status" value="1"/>
</dbReference>
<dbReference type="Pfam" id="PF22919">
    <property type="entry name" value="ATP-synt_VA_C"/>
    <property type="match status" value="1"/>
</dbReference>
<dbReference type="SMART" id="SM00382">
    <property type="entry name" value="AAA"/>
    <property type="match status" value="1"/>
</dbReference>
<dbReference type="SUPFAM" id="SSF47917">
    <property type="entry name" value="C-terminal domain of alpha and beta subunits of F1 ATP synthase"/>
    <property type="match status" value="1"/>
</dbReference>
<dbReference type="SUPFAM" id="SSF50615">
    <property type="entry name" value="N-terminal domain of alpha and beta subunits of F1 ATP synthase"/>
    <property type="match status" value="1"/>
</dbReference>
<dbReference type="SUPFAM" id="SSF52540">
    <property type="entry name" value="P-loop containing nucleoside triphosphate hydrolases"/>
    <property type="match status" value="1"/>
</dbReference>
<dbReference type="PROSITE" id="PS00152">
    <property type="entry name" value="ATPASE_ALPHA_BETA"/>
    <property type="match status" value="1"/>
</dbReference>
<comment type="function">
    <text evidence="1">Produces ATP from ADP in the presence of a proton gradient across the membrane. The catalytic sites are hosted primarily by the beta subunits.</text>
</comment>
<comment type="catalytic activity">
    <reaction evidence="1">
        <text>ATP + H2O + 4 H(+)(in) = ADP + phosphate + 5 H(+)(out)</text>
        <dbReference type="Rhea" id="RHEA:57720"/>
        <dbReference type="ChEBI" id="CHEBI:15377"/>
        <dbReference type="ChEBI" id="CHEBI:15378"/>
        <dbReference type="ChEBI" id="CHEBI:30616"/>
        <dbReference type="ChEBI" id="CHEBI:43474"/>
        <dbReference type="ChEBI" id="CHEBI:456216"/>
        <dbReference type="EC" id="7.1.2.2"/>
    </reaction>
</comment>
<comment type="subunit">
    <text evidence="1">F-type ATPases have 2 components, CF(1) - the catalytic core - and CF(0) - the membrane proton channel. CF(1) has five subunits: alpha(3), beta(3), gamma(1), delta(1), epsilon(1). CF(0) has four main subunits: a(1), b(1), b'(1) and c(9-12).</text>
</comment>
<comment type="subcellular location">
    <subcellularLocation>
        <location evidence="1">Plastid</location>
        <location evidence="1">Chloroplast thylakoid membrane</location>
        <topology evidence="1">Peripheral membrane protein</topology>
    </subcellularLocation>
</comment>
<comment type="similarity">
    <text evidence="1">Belongs to the ATPase alpha/beta chains family.</text>
</comment>
<organism>
    <name type="scientific">Saccharum officinarum</name>
    <name type="common">Sugarcane</name>
    <dbReference type="NCBI Taxonomy" id="4547"/>
    <lineage>
        <taxon>Eukaryota</taxon>
        <taxon>Viridiplantae</taxon>
        <taxon>Streptophyta</taxon>
        <taxon>Embryophyta</taxon>
        <taxon>Tracheophyta</taxon>
        <taxon>Spermatophyta</taxon>
        <taxon>Magnoliopsida</taxon>
        <taxon>Liliopsida</taxon>
        <taxon>Poales</taxon>
        <taxon>Poaceae</taxon>
        <taxon>PACMAD clade</taxon>
        <taxon>Panicoideae</taxon>
        <taxon>Andropogonodae</taxon>
        <taxon>Andropogoneae</taxon>
        <taxon>Saccharinae</taxon>
        <taxon>Saccharum</taxon>
        <taxon>Saccharum officinarum species complex</taxon>
    </lineage>
</organism>
<name>ATPB_SACOF</name>
<sequence length="498" mass="53964">MRTNPTTSRPGVSTIEEKSVGRIDQIIGPVLDITFPPGKLPNIYNALIVKSRDTADKQINVTCEVQQLLGNNRVRAVAMSATDGLMRGMEVIDTGTPLSVPVGGATLGRIFNVLGEPIDNLGPVDTSATFPIHRSAPAFIELDTKLSIFETGIKVVDLLAPYRRGGKIGLFGGAGVGKTVLIMELINNIAKAHGGVSVFGGVGERTREGNDLYMEMKESGVINEKNIEESKVALVYGQMNEPPGARMRVGLTALTMAEYFRDVNKQDVLLFIDNIFRFVQAGSEVSALLGRMPSAVGYQPTLSTEMGSLQERITSTKKGSITSIQAVYVPADDLTDPAPATTFAHLDATTVLSRGLASKGIYPAVDPLDSTSTMLQPRIVGNEHYETAQRVKETLQRYKELQDIIAILGLDELSEEDRLTVARARKIERFLSQPFFVAEVFTGSPGKYVGLAETIRGFQLILSGELDGLPEQAFYLVGNIDEASTKAINLEEESKLKK</sequence>
<protein>
    <recommendedName>
        <fullName evidence="1">ATP synthase subunit beta, chloroplastic</fullName>
        <ecNumber evidence="1">7.1.2.2</ecNumber>
    </recommendedName>
    <alternativeName>
        <fullName evidence="1">ATP synthase F1 sector subunit beta</fullName>
    </alternativeName>
    <alternativeName>
        <fullName evidence="1">F-ATPase subunit beta</fullName>
    </alternativeName>
</protein>